<organism>
    <name type="scientific">Rattus norvegicus</name>
    <name type="common">Rat</name>
    <dbReference type="NCBI Taxonomy" id="10116"/>
    <lineage>
        <taxon>Eukaryota</taxon>
        <taxon>Metazoa</taxon>
        <taxon>Chordata</taxon>
        <taxon>Craniata</taxon>
        <taxon>Vertebrata</taxon>
        <taxon>Euteleostomi</taxon>
        <taxon>Mammalia</taxon>
        <taxon>Eutheria</taxon>
        <taxon>Euarchontoglires</taxon>
        <taxon>Glires</taxon>
        <taxon>Rodentia</taxon>
        <taxon>Myomorpha</taxon>
        <taxon>Muroidea</taxon>
        <taxon>Muridae</taxon>
        <taxon>Murinae</taxon>
        <taxon>Rattus</taxon>
    </lineage>
</organism>
<comment type="function">
    <text evidence="1">Substrate-specific adapter of a BCR (BTB-CUL3-RBX1) E3 ubiquitin-protein ligase complex. The BCR(BACURD3) E3 ubiquitin ligase complex mediates the ubiquitination of target proteins, leading to their degradation by the proteasome (By similarity).</text>
</comment>
<comment type="pathway">
    <text evidence="2">Protein modification; protein ubiquitination.</text>
</comment>
<comment type="subunit">
    <text evidence="1 2 5">Homotetramer; forms a two-fold symmetric tetramer in solution. Interacts with CUL3; interaction is direct and forms a 5:5 heterodecamer (By similarity). Component of the BCR(BACURD3) E3 ubiquitin ligase complex, at least composed of CUL3, KCTD10/BACURD3 and RBX1 (By similarity). Interacts with DNA polymerase delta subunit 2/POLD2 (PubMed:15982757). Interacts with PCNA (By similarity).</text>
</comment>
<comment type="subcellular location">
    <subcellularLocation>
        <location evidence="2">Nucleus</location>
    </subcellularLocation>
</comment>
<comment type="tissue specificity">
    <text evidence="5">Expressed at highest levels in lung. Also detected in testis and heart. Very low expression, if any, in brain, liver, spleen, kidney and skeletal muscle.</text>
</comment>
<comment type="induction">
    <text evidence="5">By tumor necrosis factor/TNF in cells.</text>
</comment>
<comment type="similarity">
    <text evidence="6">Belongs to the BACURD family.</text>
</comment>
<sequence>MEEMSGESVVTSAVPAAATRTTSFKGASPSSKYVKLNVGGALYYTTMQTLTKQDTMLKAMFSGRMEVLTDSEGWILIDRCGKHFGTILNYLRDGAVPLPESRREIEELLAEAKYYLVQGLLEECQAALQNKDTYEPFCKVPVITSSKEEQRLIATSDKPAVKLLYNRSNNKYSYTSNSDDNMLKNIELFDKLSLRFNGRVLFIKDVIGDEICCWSFYGQGRKIAEVCCTSIVYATEKKQTKVEFPEARIYEETLNILLYEAQDGRGPDNALLEATGGAAGRSHHLDEDEERERERIERVRRIHIKRPDDRAHLHQ</sequence>
<reference key="1">
    <citation type="journal article" date="2005" name="Biochim. Biophys. Acta">
        <title>A novel PDIP1-related protein, KCTD10, that interacts with proliferating cell nuclear antigen and DNA polymerase delta.</title>
        <authorList>
            <person name="Zhou J."/>
            <person name="Ren K."/>
            <person name="Liu X."/>
            <person name="Xiong X."/>
            <person name="Hu X."/>
            <person name="Zhang J."/>
        </authorList>
    </citation>
    <scope>NUCLEOTIDE SEQUENCE [MRNA]</scope>
    <scope>INTERACTION WITH PCNA AND POLD2</scope>
    <scope>TISSUE SPECIFICITY</scope>
    <scope>MOTIF</scope>
    <scope>INDUCTION</scope>
    <scope>MUTAGENESIS OF 242-VAL--PHE-244</scope>
    <source>
        <strain>Wistar</strain>
    </source>
</reference>
<keyword id="KW-0007">Acetylation</keyword>
<keyword id="KW-0539">Nucleus</keyword>
<keyword id="KW-0597">Phosphoprotein</keyword>
<keyword id="KW-1185">Reference proteome</keyword>
<keyword id="KW-0833">Ubl conjugation pathway</keyword>
<protein>
    <recommendedName>
        <fullName>BTB/POZ domain-containing adapter for CUL3-mediated RhoA degradation protein 3</fullName>
    </recommendedName>
    <alternativeName>
        <fullName>BTB/POZ domain-containing protein KCTD10</fullName>
    </alternativeName>
</protein>
<feature type="chain" id="PRO_0000247423" description="BTB/POZ domain-containing adapter for CUL3-mediated RhoA degradation protein 3">
    <location>
        <begin position="1"/>
        <end position="315"/>
    </location>
</feature>
<feature type="domain" description="BTB" evidence="3">
    <location>
        <begin position="32"/>
        <end position="100"/>
    </location>
</feature>
<feature type="region of interest" description="Disordered" evidence="4">
    <location>
        <begin position="269"/>
        <end position="294"/>
    </location>
</feature>
<feature type="short sequence motif" description="Interaction with PCNA">
    <location>
        <begin position="239"/>
        <end position="245"/>
    </location>
</feature>
<feature type="modified residue" description="N-acetylmethionine" evidence="2">
    <location>
        <position position="1"/>
    </location>
</feature>
<feature type="modified residue" description="Phosphoserine" evidence="2">
    <location>
        <position position="23"/>
    </location>
</feature>
<feature type="mutagenesis site" description="Loss of PCNA binding." evidence="5">
    <original>VEF</original>
    <variation>AEA</variation>
    <location>
        <begin position="242"/>
        <end position="244"/>
    </location>
</feature>
<proteinExistence type="evidence at protein level"/>
<dbReference type="EMBL" id="AY318756">
    <property type="protein sequence ID" value="AAP79438.1"/>
    <property type="molecule type" value="mRNA"/>
</dbReference>
<dbReference type="RefSeq" id="NP_001009973.1">
    <property type="nucleotide sequence ID" value="NM_001009973.1"/>
</dbReference>
<dbReference type="SMR" id="Q7TPL3"/>
<dbReference type="BioGRID" id="268948">
    <property type="interactions" value="2"/>
</dbReference>
<dbReference type="FunCoup" id="Q7TPL3">
    <property type="interactions" value="3309"/>
</dbReference>
<dbReference type="IntAct" id="Q7TPL3">
    <property type="interactions" value="1"/>
</dbReference>
<dbReference type="STRING" id="10116.ENSRNOP00000065635"/>
<dbReference type="PhosphoSitePlus" id="Q7TPL3"/>
<dbReference type="jPOST" id="Q7TPL3"/>
<dbReference type="PaxDb" id="10116-ENSRNOP00000065635"/>
<dbReference type="GeneID" id="494521"/>
<dbReference type="KEGG" id="rno:494521"/>
<dbReference type="AGR" id="RGD:1591979"/>
<dbReference type="CTD" id="83892"/>
<dbReference type="RGD" id="1591979">
    <property type="gene designation" value="Kctd10"/>
</dbReference>
<dbReference type="VEuPathDB" id="HostDB:ENSRNOG00000047896"/>
<dbReference type="eggNOG" id="KOG2716">
    <property type="taxonomic scope" value="Eukaryota"/>
</dbReference>
<dbReference type="HOGENOM" id="CLU_060008_0_0_1"/>
<dbReference type="InParanoid" id="Q7TPL3"/>
<dbReference type="OrthoDB" id="2333377at2759"/>
<dbReference type="PhylomeDB" id="Q7TPL3"/>
<dbReference type="UniPathway" id="UPA00143"/>
<dbReference type="PRO" id="PR:Q7TPL3"/>
<dbReference type="Proteomes" id="UP000002494">
    <property type="component" value="Chromosome 12"/>
</dbReference>
<dbReference type="Bgee" id="ENSRNOG00000047896">
    <property type="expression patterns" value="Expressed in lung and 20 other cell types or tissues"/>
</dbReference>
<dbReference type="GO" id="GO:0031463">
    <property type="term" value="C:Cul3-RING ubiquitin ligase complex"/>
    <property type="evidence" value="ECO:0000250"/>
    <property type="project" value="UniProtKB"/>
</dbReference>
<dbReference type="GO" id="GO:0036038">
    <property type="term" value="C:MKS complex"/>
    <property type="evidence" value="ECO:0000266"/>
    <property type="project" value="RGD"/>
</dbReference>
<dbReference type="GO" id="GO:0005634">
    <property type="term" value="C:nucleus"/>
    <property type="evidence" value="ECO:0007669"/>
    <property type="project" value="UniProtKB-SubCell"/>
</dbReference>
<dbReference type="GO" id="GO:0042802">
    <property type="term" value="F:identical protein binding"/>
    <property type="evidence" value="ECO:0000266"/>
    <property type="project" value="RGD"/>
</dbReference>
<dbReference type="GO" id="GO:0005112">
    <property type="term" value="F:Notch binding"/>
    <property type="evidence" value="ECO:0000266"/>
    <property type="project" value="RGD"/>
</dbReference>
<dbReference type="GO" id="GO:0001525">
    <property type="term" value="P:angiogenesis"/>
    <property type="evidence" value="ECO:0000266"/>
    <property type="project" value="RGD"/>
</dbReference>
<dbReference type="GO" id="GO:0007507">
    <property type="term" value="P:heart development"/>
    <property type="evidence" value="ECO:0000266"/>
    <property type="project" value="RGD"/>
</dbReference>
<dbReference type="GO" id="GO:0045746">
    <property type="term" value="P:negative regulation of Notch signaling pathway"/>
    <property type="evidence" value="ECO:0000266"/>
    <property type="project" value="RGD"/>
</dbReference>
<dbReference type="GO" id="GO:0035024">
    <property type="term" value="P:negative regulation of Rho protein signal transduction"/>
    <property type="evidence" value="ECO:0000318"/>
    <property type="project" value="GO_Central"/>
</dbReference>
<dbReference type="GO" id="GO:0043161">
    <property type="term" value="P:proteasome-mediated ubiquitin-dependent protein catabolic process"/>
    <property type="evidence" value="ECO:0000250"/>
    <property type="project" value="UniProtKB"/>
</dbReference>
<dbReference type="GO" id="GO:0051260">
    <property type="term" value="P:protein homooligomerization"/>
    <property type="evidence" value="ECO:0007669"/>
    <property type="project" value="InterPro"/>
</dbReference>
<dbReference type="GO" id="GO:0016567">
    <property type="term" value="P:protein ubiquitination"/>
    <property type="evidence" value="ECO:0000250"/>
    <property type="project" value="UniProtKB"/>
</dbReference>
<dbReference type="GO" id="GO:0006511">
    <property type="term" value="P:ubiquitin-dependent protein catabolic process"/>
    <property type="evidence" value="ECO:0000266"/>
    <property type="project" value="RGD"/>
</dbReference>
<dbReference type="CDD" id="cd18399">
    <property type="entry name" value="BTB_POZ_KCTD10_BACURD3"/>
    <property type="match status" value="1"/>
</dbReference>
<dbReference type="FunFam" id="3.30.710.10:FF:000013">
    <property type="entry name" value="BTB/POZ domain-containing adapter for CUL3-mediated RhoA degradation protein 3"/>
    <property type="match status" value="1"/>
</dbReference>
<dbReference type="Gene3D" id="3.30.710.10">
    <property type="entry name" value="Potassium Channel Kv1.1, Chain A"/>
    <property type="match status" value="1"/>
</dbReference>
<dbReference type="InterPro" id="IPR045068">
    <property type="entry name" value="BACURD1-3"/>
</dbReference>
<dbReference type="InterPro" id="IPR000210">
    <property type="entry name" value="BTB/POZ_dom"/>
</dbReference>
<dbReference type="InterPro" id="IPR011333">
    <property type="entry name" value="SKP1/BTB/POZ_sf"/>
</dbReference>
<dbReference type="InterPro" id="IPR003131">
    <property type="entry name" value="T1-type_BTB"/>
</dbReference>
<dbReference type="PANTHER" id="PTHR11145">
    <property type="entry name" value="BTB/POZ DOMAIN-CONTAINING ADAPTER FOR CUL3-MEDIATED RHOA DEGRADATION PROTEIN FAMILY MEMBER"/>
    <property type="match status" value="1"/>
</dbReference>
<dbReference type="PANTHER" id="PTHR11145:SF14">
    <property type="entry name" value="BTB_POZ DOMAIN-CONTAINING ADAPTER FOR CUL3-MEDIATED RHOA DEGRADATION PROTEIN 3"/>
    <property type="match status" value="1"/>
</dbReference>
<dbReference type="Pfam" id="PF02214">
    <property type="entry name" value="BTB_2"/>
    <property type="match status" value="1"/>
</dbReference>
<dbReference type="SMART" id="SM00225">
    <property type="entry name" value="BTB"/>
    <property type="match status" value="1"/>
</dbReference>
<dbReference type="SUPFAM" id="SSF54695">
    <property type="entry name" value="POZ domain"/>
    <property type="match status" value="1"/>
</dbReference>
<dbReference type="PROSITE" id="PS50097">
    <property type="entry name" value="BTB"/>
    <property type="match status" value="1"/>
</dbReference>
<name>BACD3_RAT</name>
<gene>
    <name type="primary">Kctd10</name>
</gene>
<evidence type="ECO:0000250" key="1">
    <source>
        <dbReference type="UniProtKB" id="Q8WZ19"/>
    </source>
</evidence>
<evidence type="ECO:0000250" key="2">
    <source>
        <dbReference type="UniProtKB" id="Q9H3F6"/>
    </source>
</evidence>
<evidence type="ECO:0000255" key="3">
    <source>
        <dbReference type="PROSITE-ProRule" id="PRU00037"/>
    </source>
</evidence>
<evidence type="ECO:0000256" key="4">
    <source>
        <dbReference type="SAM" id="MobiDB-lite"/>
    </source>
</evidence>
<evidence type="ECO:0000269" key="5">
    <source>
    </source>
</evidence>
<evidence type="ECO:0000305" key="6"/>
<accession>Q7TPL3</accession>